<geneLocation type="plasmid">
    <name>pPAG-KE</name>
</geneLocation>
<gene>
    <name type="primary">bla</name>
    <name type="synonym">shv5</name>
</gene>
<comment type="function">
    <text>SHV enzymes hydrolyze broad spectrum cephalosporins notably cefotaxime and ceftazidime. SHV-5 causes particularly high levels of resistance to aztreonam and ceftazidime.</text>
</comment>
<comment type="catalytic activity">
    <reaction evidence="3">
        <text>a beta-lactam + H2O = a substituted beta-amino acid</text>
        <dbReference type="Rhea" id="RHEA:20401"/>
        <dbReference type="ChEBI" id="CHEBI:15377"/>
        <dbReference type="ChEBI" id="CHEBI:35627"/>
        <dbReference type="ChEBI" id="CHEBI:140347"/>
        <dbReference type="EC" id="3.5.2.6"/>
    </reaction>
</comment>
<comment type="miscellaneous">
    <text evidence="5">The class A beta-lactamase family has a specific amino-acid numbering system, sometimes called Ambler or ABL numbering and often misspelt as Amber. A multiple sequence alignment was used to derive a consensus sequence and then the consensus was numbered taking into account insertions and deletions. This allows use of identical numbers, e.g. for active site residues, despite differences in protein length. UniProt always uses natural numbering of residues, hence there appear to be differences in numbering between this entry and some papers.</text>
</comment>
<comment type="similarity">
    <text evidence="4">Belongs to the class-A beta-lactamase family.</text>
</comment>
<proteinExistence type="inferred from homology"/>
<accession>P0A3M2</accession>
<accession>P37320</accession>
<protein>
    <recommendedName>
        <fullName>Beta-lactamase SHV-5</fullName>
        <ecNumber>3.5.2.6</ecNumber>
    </recommendedName>
</protein>
<organism>
    <name type="scientific">Pseudomonas aeruginosa</name>
    <dbReference type="NCBI Taxonomy" id="287"/>
    <lineage>
        <taxon>Bacteria</taxon>
        <taxon>Pseudomonadati</taxon>
        <taxon>Pseudomonadota</taxon>
        <taxon>Gammaproteobacteria</taxon>
        <taxon>Pseudomonadales</taxon>
        <taxon>Pseudomonadaceae</taxon>
        <taxon>Pseudomonas</taxon>
    </lineage>
</organism>
<keyword id="KW-0046">Antibiotic resistance</keyword>
<keyword id="KW-1015">Disulfide bond</keyword>
<keyword id="KW-0378">Hydrolase</keyword>
<keyword id="KW-0614">Plasmid</keyword>
<keyword id="KW-0732">Signal</keyword>
<feature type="signal peptide" evidence="2">
    <location>
        <begin position="1"/>
        <end position="21"/>
    </location>
</feature>
<feature type="chain" id="PRO_0000016984" description="Beta-lactamase SHV-5">
    <location>
        <begin position="22"/>
        <end position="286"/>
    </location>
</feature>
<feature type="active site" description="Acyl-ester intermediate" evidence="3">
    <location>
        <position position="66"/>
    </location>
</feature>
<feature type="active site" description="Proton acceptor" evidence="1">
    <location>
        <position position="164"/>
    </location>
</feature>
<feature type="binding site" evidence="1">
    <location>
        <begin position="230"/>
        <end position="232"/>
    </location>
    <ligand>
        <name>substrate</name>
    </ligand>
</feature>
<feature type="disulfide bond" evidence="1">
    <location>
        <begin position="73"/>
        <end position="119"/>
    </location>
</feature>
<sequence length="286" mass="31253">MRYIRLCIISLLATLPLAVHASPQPLEQIKLSESQLSGRVGMIEMDLASGRTLTAWRADERFPMMSTFKVVLCGAVLARVDAGDEQLERKIHYRQQDLVDYSPVSEKHLADGMTVGELCAAAITMSDNSAANLLLATVGGPAGLTAFLRQIGDNVTRLDRWETELNEALPGDARDTTTPASMAATLRKLLTSQRLSARSQRQLLQWMVDDRVAGPLIRSVLPAGWFIADKTGASKRGARGIVALLGPNNKAERIVVIYLRDTPASMAERNQQIAGIGAALIEHWQR</sequence>
<dbReference type="EC" id="3.5.2.6"/>
<dbReference type="EMBL" id="AF096930">
    <property type="protein sequence ID" value="AAC64608.1"/>
    <property type="molecule type" value="Genomic_DNA"/>
</dbReference>
<dbReference type="SMR" id="P0A3M2"/>
<dbReference type="CARD" id="ARO:3001064">
    <property type="molecule name" value="SHV-5"/>
    <property type="mechanism identifier" value="ARO:0001004"/>
    <property type="mechanism name" value="antibiotic inactivation"/>
</dbReference>
<dbReference type="GO" id="GO:0008800">
    <property type="term" value="F:beta-lactamase activity"/>
    <property type="evidence" value="ECO:0007669"/>
    <property type="project" value="UniProtKB-EC"/>
</dbReference>
<dbReference type="GO" id="GO:0030655">
    <property type="term" value="P:beta-lactam antibiotic catabolic process"/>
    <property type="evidence" value="ECO:0007669"/>
    <property type="project" value="InterPro"/>
</dbReference>
<dbReference type="GO" id="GO:0046677">
    <property type="term" value="P:response to antibiotic"/>
    <property type="evidence" value="ECO:0007669"/>
    <property type="project" value="UniProtKB-KW"/>
</dbReference>
<dbReference type="Gene3D" id="3.40.710.10">
    <property type="entry name" value="DD-peptidase/beta-lactamase superfamily"/>
    <property type="match status" value="1"/>
</dbReference>
<dbReference type="InterPro" id="IPR012338">
    <property type="entry name" value="Beta-lactam/transpept-like"/>
</dbReference>
<dbReference type="InterPro" id="IPR045155">
    <property type="entry name" value="Beta-lactam_cat"/>
</dbReference>
<dbReference type="InterPro" id="IPR000871">
    <property type="entry name" value="Beta-lactam_class-A"/>
</dbReference>
<dbReference type="InterPro" id="IPR023650">
    <property type="entry name" value="Beta-lactam_class-A_AS"/>
</dbReference>
<dbReference type="NCBIfam" id="NF033103">
    <property type="entry name" value="bla_class_A"/>
    <property type="match status" value="1"/>
</dbReference>
<dbReference type="NCBIfam" id="NF000285">
    <property type="entry name" value="SHV"/>
    <property type="match status" value="1"/>
</dbReference>
<dbReference type="NCBIfam" id="NF012143">
    <property type="entry name" value="SHV_LEN_OKP"/>
    <property type="match status" value="1"/>
</dbReference>
<dbReference type="PANTHER" id="PTHR35333">
    <property type="entry name" value="BETA-LACTAMASE"/>
    <property type="match status" value="1"/>
</dbReference>
<dbReference type="PANTHER" id="PTHR35333:SF3">
    <property type="entry name" value="BETA-LACTAMASE-TYPE TRANSPEPTIDASE FOLD CONTAINING PROTEIN"/>
    <property type="match status" value="1"/>
</dbReference>
<dbReference type="Pfam" id="PF13354">
    <property type="entry name" value="Beta-lactamase2"/>
    <property type="match status" value="1"/>
</dbReference>
<dbReference type="PRINTS" id="PR00118">
    <property type="entry name" value="BLACTAMASEA"/>
</dbReference>
<dbReference type="SUPFAM" id="SSF56601">
    <property type="entry name" value="beta-lactamase/transpeptidase-like"/>
    <property type="match status" value="1"/>
</dbReference>
<dbReference type="PROSITE" id="PS00146">
    <property type="entry name" value="BETA_LACTAMASE_A"/>
    <property type="match status" value="1"/>
</dbReference>
<reference key="1">
    <citation type="submission" date="1998-10" db="EMBL/GenBank/DDBJ databases">
        <title>Extended spectrum beta-lactamase SHV-5 in Pseudomonas aeruginosa clinical strain.</title>
        <authorList>
            <person name="Scoulica E."/>
            <person name="Aransay A."/>
            <person name="Tselentis I."/>
        </authorList>
    </citation>
    <scope>NUCLEOTIDE SEQUENCE [GENOMIC DNA]</scope>
</reference>
<reference key="2">
    <citation type="journal article" date="1991" name="Biochem. J.">
        <title>A standard numbering scheme for the class A beta-lactamases.</title>
        <authorList>
            <person name="Ambler R.P."/>
            <person name="Coulson A.F."/>
            <person name="Frere J.M."/>
            <person name="Ghuysen J.M."/>
            <person name="Joris B."/>
            <person name="Forsman M."/>
            <person name="Levesque R.C."/>
            <person name="Tiraby G."/>
            <person name="Waley S.G."/>
        </authorList>
    </citation>
    <scope>AMINO ACID NUMBERING SCHEME</scope>
</reference>
<evidence type="ECO:0000250" key="1"/>
<evidence type="ECO:0000255" key="2"/>
<evidence type="ECO:0000255" key="3">
    <source>
        <dbReference type="PROSITE-ProRule" id="PRU10101"/>
    </source>
</evidence>
<evidence type="ECO:0000305" key="4"/>
<evidence type="ECO:0000305" key="5">
    <source>
    </source>
</evidence>
<name>BLA5_PSEAI</name>